<keyword id="KW-0521">NADP</keyword>
<keyword id="KW-0560">Oxidoreductase</keyword>
<keyword id="KW-0627">Porphyrin biosynthesis</keyword>
<keyword id="KW-1185">Reference proteome</keyword>
<evidence type="ECO:0000255" key="1">
    <source>
        <dbReference type="HAMAP-Rule" id="MF_00087"/>
    </source>
</evidence>
<dbReference type="EC" id="1.2.1.70" evidence="1"/>
<dbReference type="EMBL" id="BX248355">
    <property type="protein sequence ID" value="CAE48904.1"/>
    <property type="molecule type" value="Genomic_DNA"/>
</dbReference>
<dbReference type="RefSeq" id="WP_010934271.1">
    <property type="nucleotide sequence ID" value="NC_002935.2"/>
</dbReference>
<dbReference type="SMR" id="Q6NJK1"/>
<dbReference type="STRING" id="257309.DIP0400"/>
<dbReference type="DNASU" id="2650204"/>
<dbReference type="KEGG" id="cdi:DIP0400"/>
<dbReference type="HOGENOM" id="CLU_035113_4_0_11"/>
<dbReference type="UniPathway" id="UPA00251">
    <property type="reaction ID" value="UER00316"/>
</dbReference>
<dbReference type="Proteomes" id="UP000002198">
    <property type="component" value="Chromosome"/>
</dbReference>
<dbReference type="GO" id="GO:0008883">
    <property type="term" value="F:glutamyl-tRNA reductase activity"/>
    <property type="evidence" value="ECO:0007669"/>
    <property type="project" value="UniProtKB-UniRule"/>
</dbReference>
<dbReference type="GO" id="GO:0050661">
    <property type="term" value="F:NADP binding"/>
    <property type="evidence" value="ECO:0007669"/>
    <property type="project" value="InterPro"/>
</dbReference>
<dbReference type="GO" id="GO:0019353">
    <property type="term" value="P:protoporphyrinogen IX biosynthetic process from glutamate"/>
    <property type="evidence" value="ECO:0007669"/>
    <property type="project" value="TreeGrafter"/>
</dbReference>
<dbReference type="CDD" id="cd05213">
    <property type="entry name" value="NAD_bind_Glutamyl_tRNA_reduct"/>
    <property type="match status" value="1"/>
</dbReference>
<dbReference type="FunFam" id="3.30.460.30:FF:000001">
    <property type="entry name" value="Glutamyl-tRNA reductase"/>
    <property type="match status" value="1"/>
</dbReference>
<dbReference type="Gene3D" id="3.30.460.30">
    <property type="entry name" value="Glutamyl-tRNA reductase, N-terminal domain"/>
    <property type="match status" value="1"/>
</dbReference>
<dbReference type="Gene3D" id="3.40.50.720">
    <property type="entry name" value="NAD(P)-binding Rossmann-like Domain"/>
    <property type="match status" value="1"/>
</dbReference>
<dbReference type="HAMAP" id="MF_00087">
    <property type="entry name" value="Glu_tRNA_reductase"/>
    <property type="match status" value="1"/>
</dbReference>
<dbReference type="InterPro" id="IPR000343">
    <property type="entry name" value="4pyrrol_synth_GluRdtase"/>
</dbReference>
<dbReference type="InterPro" id="IPR015896">
    <property type="entry name" value="4pyrrol_synth_GluRdtase_dimer"/>
</dbReference>
<dbReference type="InterPro" id="IPR015895">
    <property type="entry name" value="4pyrrol_synth_GluRdtase_N"/>
</dbReference>
<dbReference type="InterPro" id="IPR018214">
    <property type="entry name" value="GluRdtase_CS"/>
</dbReference>
<dbReference type="InterPro" id="IPR036453">
    <property type="entry name" value="GluRdtase_dimer_dom_sf"/>
</dbReference>
<dbReference type="InterPro" id="IPR036343">
    <property type="entry name" value="GluRdtase_N_sf"/>
</dbReference>
<dbReference type="InterPro" id="IPR036291">
    <property type="entry name" value="NAD(P)-bd_dom_sf"/>
</dbReference>
<dbReference type="InterPro" id="IPR006151">
    <property type="entry name" value="Shikm_DH/Glu-tRNA_Rdtase"/>
</dbReference>
<dbReference type="NCBIfam" id="TIGR01035">
    <property type="entry name" value="hemA"/>
    <property type="match status" value="1"/>
</dbReference>
<dbReference type="NCBIfam" id="NF000744">
    <property type="entry name" value="PRK00045.1-3"/>
    <property type="match status" value="1"/>
</dbReference>
<dbReference type="PANTHER" id="PTHR43013">
    <property type="entry name" value="GLUTAMYL-TRNA REDUCTASE"/>
    <property type="match status" value="1"/>
</dbReference>
<dbReference type="PANTHER" id="PTHR43013:SF1">
    <property type="entry name" value="GLUTAMYL-TRNA REDUCTASE"/>
    <property type="match status" value="1"/>
</dbReference>
<dbReference type="Pfam" id="PF00745">
    <property type="entry name" value="GlutR_dimer"/>
    <property type="match status" value="1"/>
</dbReference>
<dbReference type="Pfam" id="PF05201">
    <property type="entry name" value="GlutR_N"/>
    <property type="match status" value="1"/>
</dbReference>
<dbReference type="Pfam" id="PF01488">
    <property type="entry name" value="Shikimate_DH"/>
    <property type="match status" value="1"/>
</dbReference>
<dbReference type="PIRSF" id="PIRSF000445">
    <property type="entry name" value="4pyrrol_synth_GluRdtase"/>
    <property type="match status" value="1"/>
</dbReference>
<dbReference type="SUPFAM" id="SSF69742">
    <property type="entry name" value="Glutamyl tRNA-reductase catalytic, N-terminal domain"/>
    <property type="match status" value="1"/>
</dbReference>
<dbReference type="SUPFAM" id="SSF69075">
    <property type="entry name" value="Glutamyl tRNA-reductase dimerization domain"/>
    <property type="match status" value="1"/>
</dbReference>
<dbReference type="SUPFAM" id="SSF51735">
    <property type="entry name" value="NAD(P)-binding Rossmann-fold domains"/>
    <property type="match status" value="1"/>
</dbReference>
<dbReference type="PROSITE" id="PS00747">
    <property type="entry name" value="GLUTR"/>
    <property type="match status" value="1"/>
</dbReference>
<reference key="1">
    <citation type="journal article" date="2003" name="Nucleic Acids Res.">
        <title>The complete genome sequence and analysis of Corynebacterium diphtheriae NCTC13129.</title>
        <authorList>
            <person name="Cerdeno-Tarraga A.-M."/>
            <person name="Efstratiou A."/>
            <person name="Dover L.G."/>
            <person name="Holden M.T.G."/>
            <person name="Pallen M.J."/>
            <person name="Bentley S.D."/>
            <person name="Besra G.S."/>
            <person name="Churcher C.M."/>
            <person name="James K.D."/>
            <person name="De Zoysa A."/>
            <person name="Chillingworth T."/>
            <person name="Cronin A."/>
            <person name="Dowd L."/>
            <person name="Feltwell T."/>
            <person name="Hamlin N."/>
            <person name="Holroyd S."/>
            <person name="Jagels K."/>
            <person name="Moule S."/>
            <person name="Quail M.A."/>
            <person name="Rabbinowitsch E."/>
            <person name="Rutherford K.M."/>
            <person name="Thomson N.R."/>
            <person name="Unwin L."/>
            <person name="Whitehead S."/>
            <person name="Barrell B.G."/>
            <person name="Parkhill J."/>
        </authorList>
    </citation>
    <scope>NUCLEOTIDE SEQUENCE [LARGE SCALE GENOMIC DNA]</scope>
    <source>
        <strain>ATCC 700971 / NCTC 13129 / Biotype gravis</strain>
    </source>
</reference>
<name>HEM1_CORDI</name>
<accession>Q6NJK1</accession>
<gene>
    <name evidence="1" type="primary">hemA</name>
    <name type="ordered locus">DIP0400</name>
</gene>
<comment type="function">
    <text evidence="1">Catalyzes the NADPH-dependent reduction of glutamyl-tRNA(Glu) to glutamate 1-semialdehyde (GSA).</text>
</comment>
<comment type="catalytic activity">
    <reaction evidence="1">
        <text>(S)-4-amino-5-oxopentanoate + tRNA(Glu) + NADP(+) = L-glutamyl-tRNA(Glu) + NADPH + H(+)</text>
        <dbReference type="Rhea" id="RHEA:12344"/>
        <dbReference type="Rhea" id="RHEA-COMP:9663"/>
        <dbReference type="Rhea" id="RHEA-COMP:9680"/>
        <dbReference type="ChEBI" id="CHEBI:15378"/>
        <dbReference type="ChEBI" id="CHEBI:57501"/>
        <dbReference type="ChEBI" id="CHEBI:57783"/>
        <dbReference type="ChEBI" id="CHEBI:58349"/>
        <dbReference type="ChEBI" id="CHEBI:78442"/>
        <dbReference type="ChEBI" id="CHEBI:78520"/>
        <dbReference type="EC" id="1.2.1.70"/>
    </reaction>
</comment>
<comment type="pathway">
    <text evidence="1">Porphyrin-containing compound metabolism; protoporphyrin-IX biosynthesis; 5-aminolevulinate from L-glutamyl-tRNA(Glu): step 1/2.</text>
</comment>
<comment type="subunit">
    <text evidence="1">Homodimer.</text>
</comment>
<comment type="domain">
    <text evidence="1">Possesses an unusual extended V-shaped dimeric structure with each monomer consisting of three distinct domains arranged along a curved 'spinal' alpha-helix. The N-terminal catalytic domain specifically recognizes the glutamate moiety of the substrate. The second domain is the NADPH-binding domain, and the third C-terminal domain is responsible for dimerization.</text>
</comment>
<comment type="miscellaneous">
    <text evidence="1">During catalysis, the active site Cys acts as a nucleophile attacking the alpha-carbonyl group of tRNA-bound glutamate with the formation of a thioester intermediate between enzyme and glutamate, and the concomitant release of tRNA(Glu). The thioester intermediate is finally reduced by direct hydride transfer from NADPH, to form the product GSA.</text>
</comment>
<comment type="similarity">
    <text evidence="1">Belongs to the glutamyl-tRNA reductase family.</text>
</comment>
<sequence length="438" mass="46918">MSVLVVGMSHRSAPVALLEKLSMDDGVRTNTVSDLVARPSLAEAMIVSTCNRLEVYAMTSSFHTGVNDVVEVLHDMSGVDMEELRGYLYVRYADAAAEHMMEVTSGLDSMVVGEQQIIGQVRTAYHSATEAGTVGPALHGLVQASLHTGKRVHTETDIDDAGASMVSFACDEALAQMSATNFAGCRALVLGAGAMASLAATHLGRLGIEHITVANRTFERAQRLADHAVEAGVAASAIEFERRMDVLCDVDVVVSATGANTFTIEAANIPAAHGDLMMIDLSLPRDISDDVAEVPGVHLVNIEKLRDVASSGEAKDHAAQRIVAEELEAYTSAQRIRDVAPAVAALRRHASSLIDSELARLSTRVPSMDEDDFSEVQRTVRRVVDKLLHQPTVRVKELAAQSGTVSYDTAIQELFGLAVEATPVAVNVDELPERINKR</sequence>
<feature type="chain" id="PRO_0000114015" description="Glutamyl-tRNA reductase">
    <location>
        <begin position="1"/>
        <end position="438"/>
    </location>
</feature>
<feature type="active site" description="Nucleophile" evidence="1">
    <location>
        <position position="50"/>
    </location>
</feature>
<feature type="binding site" evidence="1">
    <location>
        <begin position="49"/>
        <end position="52"/>
    </location>
    <ligand>
        <name>substrate</name>
    </ligand>
</feature>
<feature type="binding site" evidence="1">
    <location>
        <position position="109"/>
    </location>
    <ligand>
        <name>substrate</name>
    </ligand>
</feature>
<feature type="binding site" evidence="1">
    <location>
        <begin position="114"/>
        <end position="116"/>
    </location>
    <ligand>
        <name>substrate</name>
    </ligand>
</feature>
<feature type="binding site" evidence="1">
    <location>
        <position position="120"/>
    </location>
    <ligand>
        <name>substrate</name>
    </ligand>
</feature>
<feature type="binding site" evidence="1">
    <location>
        <begin position="191"/>
        <end position="196"/>
    </location>
    <ligand>
        <name>NADP(+)</name>
        <dbReference type="ChEBI" id="CHEBI:58349"/>
    </ligand>
</feature>
<feature type="site" description="Important for activity" evidence="1">
    <location>
        <position position="99"/>
    </location>
</feature>
<proteinExistence type="inferred from homology"/>
<protein>
    <recommendedName>
        <fullName evidence="1">Glutamyl-tRNA reductase</fullName>
        <shortName evidence="1">GluTR</shortName>
        <ecNumber evidence="1">1.2.1.70</ecNumber>
    </recommendedName>
</protein>
<organism>
    <name type="scientific">Corynebacterium diphtheriae (strain ATCC 700971 / NCTC 13129 / Biotype gravis)</name>
    <dbReference type="NCBI Taxonomy" id="257309"/>
    <lineage>
        <taxon>Bacteria</taxon>
        <taxon>Bacillati</taxon>
        <taxon>Actinomycetota</taxon>
        <taxon>Actinomycetes</taxon>
        <taxon>Mycobacteriales</taxon>
        <taxon>Corynebacteriaceae</taxon>
        <taxon>Corynebacterium</taxon>
    </lineage>
</organism>